<sequence>MPRTLTASDMVTPGSLSPPPTESTEGEQAGQPLLDGAPSSASLDTLIQHLVPTADYYPEKAYIFTFLLSSRLFIEPRELLARVCHLCIEQQQLDKPVLDKARVRKFGAKLLQLLAEWTETFPRDFEEESTIGHLTDVVGRISPCDETYGSRVHQLLQTLHQKLASLGQGPESLVGADKPISYRTKPPASIHRELLGVCSDPYTLAQQLTHVELERLRHIGPEEFVQAFVNKDPLAGTKPRFSDKTNNVEAYVKWFNRLCYLVATEICMPAKKKQRAQVIEFFIDVARECFNIGNFNSLMAIISGMNMSPVSRLKKTWAKVKTAKFFILEHQMDPTGNFCNYRTALRGAAHRSLTAHSSREKIVIPFFSLLIKDIYFLNEGCANRLPNGHVNFEKFLELAKQVGEFITWKQVECPFEQDPSITHYLYTAPIFSEDGLYLASYESESPESQTEKERWKSLRSSILGKT</sequence>
<evidence type="ECO:0000250" key="1"/>
<evidence type="ECO:0000255" key="2">
    <source>
        <dbReference type="PROSITE-ProRule" id="PRU00135"/>
    </source>
</evidence>
<evidence type="ECO:0000255" key="3">
    <source>
        <dbReference type="PROSITE-ProRule" id="PRU00168"/>
    </source>
</evidence>
<evidence type="ECO:0000256" key="4">
    <source>
        <dbReference type="SAM" id="MobiDB-lite"/>
    </source>
</evidence>
<evidence type="ECO:0000303" key="5">
    <source>
    </source>
</evidence>
<evidence type="ECO:0000305" key="6"/>
<name>RGF1C_MOUSE</name>
<proteinExistence type="evidence at transcript level"/>
<dbReference type="EMBL" id="AK018593">
    <property type="protein sequence ID" value="BAB31297.1"/>
    <property type="molecule type" value="mRNA"/>
</dbReference>
<dbReference type="EMBL" id="AK039330">
    <property type="protein sequence ID" value="BAC30320.1"/>
    <property type="molecule type" value="mRNA"/>
</dbReference>
<dbReference type="EMBL" id="AL606479">
    <property type="protein sequence ID" value="CAI23944.1"/>
    <property type="status" value="ALT_SEQ"/>
    <property type="molecule type" value="Genomic_DNA"/>
</dbReference>
<dbReference type="EMBL" id="AL645913">
    <property type="protein sequence ID" value="CAI23944.1"/>
    <property type="status" value="JOINED"/>
    <property type="molecule type" value="Genomic_DNA"/>
</dbReference>
<dbReference type="EMBL" id="AL645913">
    <property type="protein sequence ID" value="CAI24373.1"/>
    <property type="status" value="ALT_SEQ"/>
    <property type="molecule type" value="Genomic_DNA"/>
</dbReference>
<dbReference type="EMBL" id="AL606479">
    <property type="protein sequence ID" value="CAI24373.1"/>
    <property type="status" value="JOINED"/>
    <property type="molecule type" value="Genomic_DNA"/>
</dbReference>
<dbReference type="CCDS" id="CCDS24625.1">
    <molecule id="Q9D300-1"/>
</dbReference>
<dbReference type="CCDS" id="CCDS83798.1">
    <molecule id="Q9D300-2"/>
</dbReference>
<dbReference type="RefSeq" id="NP_001334391.1">
    <molecule id="Q9D300-2"/>
    <property type="nucleotide sequence ID" value="NM_001347462.1"/>
</dbReference>
<dbReference type="RefSeq" id="NP_083280.1">
    <molecule id="Q9D300-1"/>
    <property type="nucleotide sequence ID" value="NM_029004.1"/>
</dbReference>
<dbReference type="RefSeq" id="XP_011247592.1">
    <property type="nucleotide sequence ID" value="XM_011249290.2"/>
</dbReference>
<dbReference type="RefSeq" id="XP_030102264.1">
    <molecule id="Q9D300-1"/>
    <property type="nucleotide sequence ID" value="XM_030246404.1"/>
</dbReference>
<dbReference type="RefSeq" id="XP_030102265.1">
    <molecule id="Q9D300-1"/>
    <property type="nucleotide sequence ID" value="XM_030246405.1"/>
</dbReference>
<dbReference type="SMR" id="Q9D300"/>
<dbReference type="FunCoup" id="Q9D300">
    <property type="interactions" value="367"/>
</dbReference>
<dbReference type="STRING" id="10090.ENSMUSP00000065619"/>
<dbReference type="GlyGen" id="Q9D300">
    <property type="glycosylation" value="1 site"/>
</dbReference>
<dbReference type="iPTMnet" id="Q9D300"/>
<dbReference type="PhosphoSitePlus" id="Q9D300"/>
<dbReference type="PaxDb" id="10090-ENSMUSP00000090829"/>
<dbReference type="ProteomicsDB" id="255246">
    <molecule id="Q9D300-1"/>
</dbReference>
<dbReference type="ProteomicsDB" id="255247">
    <molecule id="Q9D300-2"/>
</dbReference>
<dbReference type="Antibodypedia" id="29571">
    <property type="antibodies" value="139 antibodies from 24 providers"/>
</dbReference>
<dbReference type="DNASU" id="74563"/>
<dbReference type="Ensembl" id="ENSMUST00000063444.3">
    <molecule id="Q9D300-2"/>
    <property type="protein sequence ID" value="ENSMUSP00000065619.3"/>
    <property type="gene ID" value="ENSMUSG00000020374.17"/>
</dbReference>
<dbReference type="Ensembl" id="ENSMUST00000093142.12">
    <molecule id="Q9D300-1"/>
    <property type="protein sequence ID" value="ENSMUSP00000090829.6"/>
    <property type="gene ID" value="ENSMUSG00000020374.17"/>
</dbReference>
<dbReference type="GeneID" id="74563"/>
<dbReference type="KEGG" id="mmu:74563"/>
<dbReference type="UCSC" id="uc007irj.1">
    <molecule id="Q9D300-1"/>
    <property type="organism name" value="mouse"/>
</dbReference>
<dbReference type="AGR" id="MGI:1921813"/>
<dbReference type="CTD" id="255426"/>
<dbReference type="MGI" id="MGI:1921813">
    <property type="gene designation" value="Rasgef1c"/>
</dbReference>
<dbReference type="VEuPathDB" id="HostDB:ENSMUSG00000020374"/>
<dbReference type="eggNOG" id="KOG3541">
    <property type="taxonomic scope" value="Eukaryota"/>
</dbReference>
<dbReference type="GeneTree" id="ENSGT00940000161005"/>
<dbReference type="HOGENOM" id="CLU_022907_2_0_1"/>
<dbReference type="InParanoid" id="Q9D300"/>
<dbReference type="OMA" id="PAMTPEG"/>
<dbReference type="OrthoDB" id="13465at9989"/>
<dbReference type="PhylomeDB" id="Q9D300"/>
<dbReference type="TreeFam" id="TF313379"/>
<dbReference type="BioGRID-ORCS" id="74563">
    <property type="hits" value="1 hit in 76 CRISPR screens"/>
</dbReference>
<dbReference type="PRO" id="PR:Q9D300"/>
<dbReference type="Proteomes" id="UP000000589">
    <property type="component" value="Chromosome 11"/>
</dbReference>
<dbReference type="RNAct" id="Q9D300">
    <property type="molecule type" value="protein"/>
</dbReference>
<dbReference type="Bgee" id="ENSMUSG00000020374">
    <property type="expression patterns" value="Expressed in superior frontal gyrus and 58 other cell types or tissues"/>
</dbReference>
<dbReference type="ExpressionAtlas" id="Q9D300">
    <property type="expression patterns" value="baseline and differential"/>
</dbReference>
<dbReference type="GO" id="GO:0005085">
    <property type="term" value="F:guanyl-nucleotide exchange factor activity"/>
    <property type="evidence" value="ECO:0007669"/>
    <property type="project" value="UniProtKB-KW"/>
</dbReference>
<dbReference type="GO" id="GO:0007264">
    <property type="term" value="P:small GTPase-mediated signal transduction"/>
    <property type="evidence" value="ECO:0007669"/>
    <property type="project" value="InterPro"/>
</dbReference>
<dbReference type="CDD" id="cd00155">
    <property type="entry name" value="RasGEF"/>
    <property type="match status" value="1"/>
</dbReference>
<dbReference type="CDD" id="cd06224">
    <property type="entry name" value="REM"/>
    <property type="match status" value="1"/>
</dbReference>
<dbReference type="FunFam" id="1.10.840.10:FF:000008">
    <property type="entry name" value="Ras-GEF domain-containing family member 1B"/>
    <property type="match status" value="1"/>
</dbReference>
<dbReference type="Gene3D" id="1.10.840.10">
    <property type="entry name" value="Ras guanine-nucleotide exchange factors catalytic domain"/>
    <property type="match status" value="1"/>
</dbReference>
<dbReference type="Gene3D" id="1.20.870.10">
    <property type="entry name" value="Son of sevenless (SoS) protein Chain: S domain 1"/>
    <property type="match status" value="1"/>
</dbReference>
<dbReference type="InterPro" id="IPR008937">
    <property type="entry name" value="Ras-like_GEF"/>
</dbReference>
<dbReference type="InterPro" id="IPR000651">
    <property type="entry name" value="Ras-like_Gua-exchang_fac_N"/>
</dbReference>
<dbReference type="InterPro" id="IPR019804">
    <property type="entry name" value="Ras_G-nucl-exch_fac_CS"/>
</dbReference>
<dbReference type="InterPro" id="IPR023578">
    <property type="entry name" value="Ras_GEF_dom_sf"/>
</dbReference>
<dbReference type="InterPro" id="IPR001895">
    <property type="entry name" value="RASGEF_cat_dom"/>
</dbReference>
<dbReference type="InterPro" id="IPR036964">
    <property type="entry name" value="RASGEF_cat_dom_sf"/>
</dbReference>
<dbReference type="PANTHER" id="PTHR23113">
    <property type="entry name" value="GUANINE NUCLEOTIDE EXCHANGE FACTOR"/>
    <property type="match status" value="1"/>
</dbReference>
<dbReference type="PANTHER" id="PTHR23113:SF186">
    <property type="entry name" value="RAS-GEF DOMAIN-CONTAINING FAMILY MEMBER 1C"/>
    <property type="match status" value="1"/>
</dbReference>
<dbReference type="Pfam" id="PF00617">
    <property type="entry name" value="RasGEF"/>
    <property type="match status" value="1"/>
</dbReference>
<dbReference type="Pfam" id="PF00618">
    <property type="entry name" value="RasGEF_N"/>
    <property type="match status" value="1"/>
</dbReference>
<dbReference type="SMART" id="SM00147">
    <property type="entry name" value="RasGEF"/>
    <property type="match status" value="1"/>
</dbReference>
<dbReference type="SUPFAM" id="SSF48366">
    <property type="entry name" value="Ras GEF"/>
    <property type="match status" value="1"/>
</dbReference>
<dbReference type="PROSITE" id="PS00720">
    <property type="entry name" value="RASGEF"/>
    <property type="match status" value="1"/>
</dbReference>
<dbReference type="PROSITE" id="PS50009">
    <property type="entry name" value="RASGEF_CAT"/>
    <property type="match status" value="1"/>
</dbReference>
<dbReference type="PROSITE" id="PS50212">
    <property type="entry name" value="RASGEF_NTER"/>
    <property type="match status" value="1"/>
</dbReference>
<feature type="chain" id="PRO_0000297645" description="Ras-GEF domain-containing family member 1C">
    <location>
        <begin position="1"/>
        <end position="466"/>
    </location>
</feature>
<feature type="domain" description="N-terminal Ras-GEF" evidence="2">
    <location>
        <begin position="34"/>
        <end position="164"/>
    </location>
</feature>
<feature type="domain" description="Ras-GEF" evidence="3">
    <location>
        <begin position="200"/>
        <end position="446"/>
    </location>
</feature>
<feature type="region of interest" description="Disordered" evidence="4">
    <location>
        <begin position="1"/>
        <end position="35"/>
    </location>
</feature>
<feature type="region of interest" description="Disordered" evidence="4">
    <location>
        <begin position="443"/>
        <end position="466"/>
    </location>
</feature>
<feature type="splice variant" id="VSP_027317" description="In isoform 2." evidence="5">
    <original>M</original>
    <variation>MAGM</variation>
    <location>
        <position position="1"/>
    </location>
</feature>
<reference key="1">
    <citation type="journal article" date="2005" name="Science">
        <title>The transcriptional landscape of the mammalian genome.</title>
        <authorList>
            <person name="Carninci P."/>
            <person name="Kasukawa T."/>
            <person name="Katayama S."/>
            <person name="Gough J."/>
            <person name="Frith M.C."/>
            <person name="Maeda N."/>
            <person name="Oyama R."/>
            <person name="Ravasi T."/>
            <person name="Lenhard B."/>
            <person name="Wells C."/>
            <person name="Kodzius R."/>
            <person name="Shimokawa K."/>
            <person name="Bajic V.B."/>
            <person name="Brenner S.E."/>
            <person name="Batalov S."/>
            <person name="Forrest A.R."/>
            <person name="Zavolan M."/>
            <person name="Davis M.J."/>
            <person name="Wilming L.G."/>
            <person name="Aidinis V."/>
            <person name="Allen J.E."/>
            <person name="Ambesi-Impiombato A."/>
            <person name="Apweiler R."/>
            <person name="Aturaliya R.N."/>
            <person name="Bailey T.L."/>
            <person name="Bansal M."/>
            <person name="Baxter L."/>
            <person name="Beisel K.W."/>
            <person name="Bersano T."/>
            <person name="Bono H."/>
            <person name="Chalk A.M."/>
            <person name="Chiu K.P."/>
            <person name="Choudhary V."/>
            <person name="Christoffels A."/>
            <person name="Clutterbuck D.R."/>
            <person name="Crowe M.L."/>
            <person name="Dalla E."/>
            <person name="Dalrymple B.P."/>
            <person name="de Bono B."/>
            <person name="Della Gatta G."/>
            <person name="di Bernardo D."/>
            <person name="Down T."/>
            <person name="Engstrom P."/>
            <person name="Fagiolini M."/>
            <person name="Faulkner G."/>
            <person name="Fletcher C.F."/>
            <person name="Fukushima T."/>
            <person name="Furuno M."/>
            <person name="Futaki S."/>
            <person name="Gariboldi M."/>
            <person name="Georgii-Hemming P."/>
            <person name="Gingeras T.R."/>
            <person name="Gojobori T."/>
            <person name="Green R.E."/>
            <person name="Gustincich S."/>
            <person name="Harbers M."/>
            <person name="Hayashi Y."/>
            <person name="Hensch T.K."/>
            <person name="Hirokawa N."/>
            <person name="Hill D."/>
            <person name="Huminiecki L."/>
            <person name="Iacono M."/>
            <person name="Ikeo K."/>
            <person name="Iwama A."/>
            <person name="Ishikawa T."/>
            <person name="Jakt M."/>
            <person name="Kanapin A."/>
            <person name="Katoh M."/>
            <person name="Kawasawa Y."/>
            <person name="Kelso J."/>
            <person name="Kitamura H."/>
            <person name="Kitano H."/>
            <person name="Kollias G."/>
            <person name="Krishnan S.P."/>
            <person name="Kruger A."/>
            <person name="Kummerfeld S.K."/>
            <person name="Kurochkin I.V."/>
            <person name="Lareau L.F."/>
            <person name="Lazarevic D."/>
            <person name="Lipovich L."/>
            <person name="Liu J."/>
            <person name="Liuni S."/>
            <person name="McWilliam S."/>
            <person name="Madan Babu M."/>
            <person name="Madera M."/>
            <person name="Marchionni L."/>
            <person name="Matsuda H."/>
            <person name="Matsuzawa S."/>
            <person name="Miki H."/>
            <person name="Mignone F."/>
            <person name="Miyake S."/>
            <person name="Morris K."/>
            <person name="Mottagui-Tabar S."/>
            <person name="Mulder N."/>
            <person name="Nakano N."/>
            <person name="Nakauchi H."/>
            <person name="Ng P."/>
            <person name="Nilsson R."/>
            <person name="Nishiguchi S."/>
            <person name="Nishikawa S."/>
            <person name="Nori F."/>
            <person name="Ohara O."/>
            <person name="Okazaki Y."/>
            <person name="Orlando V."/>
            <person name="Pang K.C."/>
            <person name="Pavan W.J."/>
            <person name="Pavesi G."/>
            <person name="Pesole G."/>
            <person name="Petrovsky N."/>
            <person name="Piazza S."/>
            <person name="Reed J."/>
            <person name="Reid J.F."/>
            <person name="Ring B.Z."/>
            <person name="Ringwald M."/>
            <person name="Rost B."/>
            <person name="Ruan Y."/>
            <person name="Salzberg S.L."/>
            <person name="Sandelin A."/>
            <person name="Schneider C."/>
            <person name="Schoenbach C."/>
            <person name="Sekiguchi K."/>
            <person name="Semple C.A."/>
            <person name="Seno S."/>
            <person name="Sessa L."/>
            <person name="Sheng Y."/>
            <person name="Shibata Y."/>
            <person name="Shimada H."/>
            <person name="Shimada K."/>
            <person name="Silva D."/>
            <person name="Sinclair B."/>
            <person name="Sperling S."/>
            <person name="Stupka E."/>
            <person name="Sugiura K."/>
            <person name="Sultana R."/>
            <person name="Takenaka Y."/>
            <person name="Taki K."/>
            <person name="Tammoja K."/>
            <person name="Tan S.L."/>
            <person name="Tang S."/>
            <person name="Taylor M.S."/>
            <person name="Tegner J."/>
            <person name="Teichmann S.A."/>
            <person name="Ueda H.R."/>
            <person name="van Nimwegen E."/>
            <person name="Verardo R."/>
            <person name="Wei C.L."/>
            <person name="Yagi K."/>
            <person name="Yamanishi H."/>
            <person name="Zabarovsky E."/>
            <person name="Zhu S."/>
            <person name="Zimmer A."/>
            <person name="Hide W."/>
            <person name="Bult C."/>
            <person name="Grimmond S.M."/>
            <person name="Teasdale R.D."/>
            <person name="Liu E.T."/>
            <person name="Brusic V."/>
            <person name="Quackenbush J."/>
            <person name="Wahlestedt C."/>
            <person name="Mattick J.S."/>
            <person name="Hume D.A."/>
            <person name="Kai C."/>
            <person name="Sasaki D."/>
            <person name="Tomaru Y."/>
            <person name="Fukuda S."/>
            <person name="Kanamori-Katayama M."/>
            <person name="Suzuki M."/>
            <person name="Aoki J."/>
            <person name="Arakawa T."/>
            <person name="Iida J."/>
            <person name="Imamura K."/>
            <person name="Itoh M."/>
            <person name="Kato T."/>
            <person name="Kawaji H."/>
            <person name="Kawagashira N."/>
            <person name="Kawashima T."/>
            <person name="Kojima M."/>
            <person name="Kondo S."/>
            <person name="Konno H."/>
            <person name="Nakano K."/>
            <person name="Ninomiya N."/>
            <person name="Nishio T."/>
            <person name="Okada M."/>
            <person name="Plessy C."/>
            <person name="Shibata K."/>
            <person name="Shiraki T."/>
            <person name="Suzuki S."/>
            <person name="Tagami M."/>
            <person name="Waki K."/>
            <person name="Watahiki A."/>
            <person name="Okamura-Oho Y."/>
            <person name="Suzuki H."/>
            <person name="Kawai J."/>
            <person name="Hayashizaki Y."/>
        </authorList>
    </citation>
    <scope>NUCLEOTIDE SEQUENCE [LARGE SCALE MRNA] (ISOFORMS 1 AND 2)</scope>
    <source>
        <strain>C57BL/6J</strain>
        <tissue>Cecum</tissue>
        <tissue>Spinal cord</tissue>
    </source>
</reference>
<reference key="2">
    <citation type="journal article" date="2009" name="PLoS Biol.">
        <title>Lineage-specific biology revealed by a finished genome assembly of the mouse.</title>
        <authorList>
            <person name="Church D.M."/>
            <person name="Goodstadt L."/>
            <person name="Hillier L.W."/>
            <person name="Zody M.C."/>
            <person name="Goldstein S."/>
            <person name="She X."/>
            <person name="Bult C.J."/>
            <person name="Agarwala R."/>
            <person name="Cherry J.L."/>
            <person name="DiCuccio M."/>
            <person name="Hlavina W."/>
            <person name="Kapustin Y."/>
            <person name="Meric P."/>
            <person name="Maglott D."/>
            <person name="Birtle Z."/>
            <person name="Marques A.C."/>
            <person name="Graves T."/>
            <person name="Zhou S."/>
            <person name="Teague B."/>
            <person name="Potamousis K."/>
            <person name="Churas C."/>
            <person name="Place M."/>
            <person name="Herschleb J."/>
            <person name="Runnheim R."/>
            <person name="Forrest D."/>
            <person name="Amos-Landgraf J."/>
            <person name="Schwartz D.C."/>
            <person name="Cheng Z."/>
            <person name="Lindblad-Toh K."/>
            <person name="Eichler E.E."/>
            <person name="Ponting C.P."/>
        </authorList>
    </citation>
    <scope>NUCLEOTIDE SEQUENCE [LARGE SCALE GENOMIC DNA]</scope>
    <source>
        <strain>C57BL/6J</strain>
    </source>
</reference>
<protein>
    <recommendedName>
        <fullName>Ras-GEF domain-containing family member 1C</fullName>
    </recommendedName>
</protein>
<accession>Q9D300</accession>
<accession>Q8BYJ7</accession>
<gene>
    <name type="primary">Rasgef1c</name>
</gene>
<organism>
    <name type="scientific">Mus musculus</name>
    <name type="common">Mouse</name>
    <dbReference type="NCBI Taxonomy" id="10090"/>
    <lineage>
        <taxon>Eukaryota</taxon>
        <taxon>Metazoa</taxon>
        <taxon>Chordata</taxon>
        <taxon>Craniata</taxon>
        <taxon>Vertebrata</taxon>
        <taxon>Euteleostomi</taxon>
        <taxon>Mammalia</taxon>
        <taxon>Eutheria</taxon>
        <taxon>Euarchontoglires</taxon>
        <taxon>Glires</taxon>
        <taxon>Rodentia</taxon>
        <taxon>Myomorpha</taxon>
        <taxon>Muroidea</taxon>
        <taxon>Muridae</taxon>
        <taxon>Murinae</taxon>
        <taxon>Mus</taxon>
        <taxon>Mus</taxon>
    </lineage>
</organism>
<comment type="function">
    <text evidence="1">Guanine nucleotide exchange factor (GEF).</text>
</comment>
<comment type="alternative products">
    <event type="alternative splicing"/>
    <isoform>
        <id>Q9D300-1</id>
        <name>1</name>
        <sequence type="displayed"/>
    </isoform>
    <isoform>
        <id>Q9D300-2</id>
        <name>2</name>
        <sequence type="described" ref="VSP_027317"/>
    </isoform>
</comment>
<comment type="sequence caution" evidence="6">
    <conflict type="erroneous gene model prediction">
        <sequence resource="EMBL-CDS" id="CAI23944"/>
    </conflict>
</comment>
<comment type="sequence caution" evidence="6">
    <conflict type="erroneous gene model prediction">
        <sequence resource="EMBL-CDS" id="CAI24373"/>
    </conflict>
</comment>
<keyword id="KW-0025">Alternative splicing</keyword>
<keyword id="KW-0344">Guanine-nucleotide releasing factor</keyword>
<keyword id="KW-1185">Reference proteome</keyword>